<name>RAD5_DEBHA</name>
<comment type="function">
    <text evidence="1">Probable helicase, member of the UBC2/RAD6 epistasis group. Functions with DNA repair protein RAD18 in error-free postreplication DNA repair. Involved in the maintenance of wild-type rates of instability of simple repetitive sequences such as poly(GT) repeats. Seems to be involved in maintaining a balance which acts in favor of error-prone non-homologous joining during DNA double-strand breaks repairs (By similarity).</text>
</comment>
<comment type="subcellular location">
    <subcellularLocation>
        <location evidence="1">Cytoplasm</location>
    </subcellularLocation>
    <subcellularLocation>
        <location evidence="1">Nucleus</location>
    </subcellularLocation>
</comment>
<comment type="similarity">
    <text evidence="6">Belongs to the SNF2/RAD54 helicase family.</text>
</comment>
<comment type="sequence caution" evidence="6">
    <conflict type="erroneous initiation">
        <sequence resource="EMBL-CDS" id="CAR65933"/>
    </conflict>
</comment>
<reference key="1">
    <citation type="journal article" date="2004" name="Nature">
        <title>Genome evolution in yeasts.</title>
        <authorList>
            <person name="Dujon B."/>
            <person name="Sherman D."/>
            <person name="Fischer G."/>
            <person name="Durrens P."/>
            <person name="Casaregola S."/>
            <person name="Lafontaine I."/>
            <person name="de Montigny J."/>
            <person name="Marck C."/>
            <person name="Neuveglise C."/>
            <person name="Talla E."/>
            <person name="Goffard N."/>
            <person name="Frangeul L."/>
            <person name="Aigle M."/>
            <person name="Anthouard V."/>
            <person name="Babour A."/>
            <person name="Barbe V."/>
            <person name="Barnay S."/>
            <person name="Blanchin S."/>
            <person name="Beckerich J.-M."/>
            <person name="Beyne E."/>
            <person name="Bleykasten C."/>
            <person name="Boisrame A."/>
            <person name="Boyer J."/>
            <person name="Cattolico L."/>
            <person name="Confanioleri F."/>
            <person name="de Daruvar A."/>
            <person name="Despons L."/>
            <person name="Fabre E."/>
            <person name="Fairhead C."/>
            <person name="Ferry-Dumazet H."/>
            <person name="Groppi A."/>
            <person name="Hantraye F."/>
            <person name="Hennequin C."/>
            <person name="Jauniaux N."/>
            <person name="Joyet P."/>
            <person name="Kachouri R."/>
            <person name="Kerrest A."/>
            <person name="Koszul R."/>
            <person name="Lemaire M."/>
            <person name="Lesur I."/>
            <person name="Ma L."/>
            <person name="Muller H."/>
            <person name="Nicaud J.-M."/>
            <person name="Nikolski M."/>
            <person name="Oztas S."/>
            <person name="Ozier-Kalogeropoulos O."/>
            <person name="Pellenz S."/>
            <person name="Potier S."/>
            <person name="Richard G.-F."/>
            <person name="Straub M.-L."/>
            <person name="Suleau A."/>
            <person name="Swennen D."/>
            <person name="Tekaia F."/>
            <person name="Wesolowski-Louvel M."/>
            <person name="Westhof E."/>
            <person name="Wirth B."/>
            <person name="Zeniou-Meyer M."/>
            <person name="Zivanovic Y."/>
            <person name="Bolotin-Fukuhara M."/>
            <person name="Thierry A."/>
            <person name="Bouchier C."/>
            <person name="Caudron B."/>
            <person name="Scarpelli C."/>
            <person name="Gaillardin C."/>
            <person name="Weissenbach J."/>
            <person name="Wincker P."/>
            <person name="Souciet J.-L."/>
        </authorList>
    </citation>
    <scope>NUCLEOTIDE SEQUENCE [LARGE SCALE GENOMIC DNA]</scope>
    <source>
        <strain>ATCC 36239 / CBS 767 / BCRC 21394 / JCM 1990 / NBRC 0083 / IGC 2968</strain>
    </source>
</reference>
<dbReference type="EC" id="3.6.4.-"/>
<dbReference type="EMBL" id="CR382139">
    <property type="protein sequence ID" value="CAR65933.1"/>
    <property type="status" value="ALT_INIT"/>
    <property type="molecule type" value="Genomic_DNA"/>
</dbReference>
<dbReference type="RefSeq" id="XP_002770598.1">
    <property type="nucleotide sequence ID" value="XM_002770552.1"/>
</dbReference>
<dbReference type="SMR" id="Q6BIP2"/>
<dbReference type="FunCoup" id="Q6BIP2">
    <property type="interactions" value="1072"/>
</dbReference>
<dbReference type="STRING" id="284592.Q6BIP2"/>
<dbReference type="GeneID" id="8999151"/>
<dbReference type="KEGG" id="dha:DEHA2G08800g"/>
<dbReference type="eggNOG" id="KOG1001">
    <property type="taxonomic scope" value="Eukaryota"/>
</dbReference>
<dbReference type="HOGENOM" id="CLU_000315_2_5_1"/>
<dbReference type="InParanoid" id="Q6BIP2"/>
<dbReference type="OrthoDB" id="2801544at2759"/>
<dbReference type="Proteomes" id="UP000000599">
    <property type="component" value="Chromosome G"/>
</dbReference>
<dbReference type="GO" id="GO:0005737">
    <property type="term" value="C:cytoplasm"/>
    <property type="evidence" value="ECO:0007669"/>
    <property type="project" value="UniProtKB-SubCell"/>
</dbReference>
<dbReference type="GO" id="GO:0005634">
    <property type="term" value="C:nucleus"/>
    <property type="evidence" value="ECO:0007669"/>
    <property type="project" value="UniProtKB-SubCell"/>
</dbReference>
<dbReference type="GO" id="GO:0005524">
    <property type="term" value="F:ATP binding"/>
    <property type="evidence" value="ECO:0007669"/>
    <property type="project" value="UniProtKB-KW"/>
</dbReference>
<dbReference type="GO" id="GO:0008094">
    <property type="term" value="F:ATP-dependent activity, acting on DNA"/>
    <property type="evidence" value="ECO:0007669"/>
    <property type="project" value="TreeGrafter"/>
</dbReference>
<dbReference type="GO" id="GO:0003677">
    <property type="term" value="F:DNA binding"/>
    <property type="evidence" value="ECO:0007669"/>
    <property type="project" value="UniProtKB-KW"/>
</dbReference>
<dbReference type="GO" id="GO:0004386">
    <property type="term" value="F:helicase activity"/>
    <property type="evidence" value="ECO:0007669"/>
    <property type="project" value="UniProtKB-KW"/>
</dbReference>
<dbReference type="GO" id="GO:0016818">
    <property type="term" value="F:hydrolase activity, acting on acid anhydrides, in phosphorus-containing anhydrides"/>
    <property type="evidence" value="ECO:0007669"/>
    <property type="project" value="InterPro"/>
</dbReference>
<dbReference type="GO" id="GO:0008270">
    <property type="term" value="F:zinc ion binding"/>
    <property type="evidence" value="ECO:0007669"/>
    <property type="project" value="UniProtKB-KW"/>
</dbReference>
<dbReference type="GO" id="GO:0006281">
    <property type="term" value="P:DNA repair"/>
    <property type="evidence" value="ECO:0007669"/>
    <property type="project" value="UniProtKB-KW"/>
</dbReference>
<dbReference type="CDD" id="cd18008">
    <property type="entry name" value="DEXDc_SHPRH-like"/>
    <property type="match status" value="1"/>
</dbReference>
<dbReference type="CDD" id="cd23131">
    <property type="entry name" value="RING-HC_RAD5"/>
    <property type="match status" value="1"/>
</dbReference>
<dbReference type="CDD" id="cd18793">
    <property type="entry name" value="SF2_C_SNF"/>
    <property type="match status" value="1"/>
</dbReference>
<dbReference type="Gene3D" id="3.40.50.300">
    <property type="entry name" value="P-loop containing nucleotide triphosphate hydrolases"/>
    <property type="match status" value="2"/>
</dbReference>
<dbReference type="Gene3D" id="3.40.50.10810">
    <property type="entry name" value="Tandem AAA-ATPase domain"/>
    <property type="match status" value="1"/>
</dbReference>
<dbReference type="Gene3D" id="3.30.40.10">
    <property type="entry name" value="Zinc/RING finger domain, C3HC4 (zinc finger)"/>
    <property type="match status" value="1"/>
</dbReference>
<dbReference type="InterPro" id="IPR014001">
    <property type="entry name" value="Helicase_ATP-bd"/>
</dbReference>
<dbReference type="InterPro" id="IPR001650">
    <property type="entry name" value="Helicase_C-like"/>
</dbReference>
<dbReference type="InterPro" id="IPR014905">
    <property type="entry name" value="HIRAN"/>
</dbReference>
<dbReference type="InterPro" id="IPR027417">
    <property type="entry name" value="P-loop_NTPase"/>
</dbReference>
<dbReference type="InterPro" id="IPR038718">
    <property type="entry name" value="SNF2-like_sf"/>
</dbReference>
<dbReference type="InterPro" id="IPR049730">
    <property type="entry name" value="SNF2/RAD54-like_C"/>
</dbReference>
<dbReference type="InterPro" id="IPR000330">
    <property type="entry name" value="SNF2_N"/>
</dbReference>
<dbReference type="InterPro" id="IPR050628">
    <property type="entry name" value="SNF2_RAD54_helicase_TF"/>
</dbReference>
<dbReference type="InterPro" id="IPR001841">
    <property type="entry name" value="Znf_RING"/>
</dbReference>
<dbReference type="InterPro" id="IPR013083">
    <property type="entry name" value="Znf_RING/FYVE/PHD"/>
</dbReference>
<dbReference type="InterPro" id="IPR017907">
    <property type="entry name" value="Znf_RING_CS"/>
</dbReference>
<dbReference type="PANTHER" id="PTHR45626:SF22">
    <property type="entry name" value="DNA REPAIR PROTEIN RAD5"/>
    <property type="match status" value="1"/>
</dbReference>
<dbReference type="PANTHER" id="PTHR45626">
    <property type="entry name" value="TRANSCRIPTION TERMINATION FACTOR 2-RELATED"/>
    <property type="match status" value="1"/>
</dbReference>
<dbReference type="Pfam" id="PF00271">
    <property type="entry name" value="Helicase_C"/>
    <property type="match status" value="1"/>
</dbReference>
<dbReference type="Pfam" id="PF08797">
    <property type="entry name" value="HIRAN"/>
    <property type="match status" value="1"/>
</dbReference>
<dbReference type="Pfam" id="PF00176">
    <property type="entry name" value="SNF2-rel_dom"/>
    <property type="match status" value="1"/>
</dbReference>
<dbReference type="Pfam" id="PF13920">
    <property type="entry name" value="zf-C3HC4_3"/>
    <property type="match status" value="1"/>
</dbReference>
<dbReference type="SMART" id="SM00487">
    <property type="entry name" value="DEXDc"/>
    <property type="match status" value="1"/>
</dbReference>
<dbReference type="SMART" id="SM00490">
    <property type="entry name" value="HELICc"/>
    <property type="match status" value="1"/>
</dbReference>
<dbReference type="SMART" id="SM00910">
    <property type="entry name" value="HIRAN"/>
    <property type="match status" value="1"/>
</dbReference>
<dbReference type="SMART" id="SM00184">
    <property type="entry name" value="RING"/>
    <property type="match status" value="1"/>
</dbReference>
<dbReference type="SUPFAM" id="SSF52540">
    <property type="entry name" value="P-loop containing nucleoside triphosphate hydrolases"/>
    <property type="match status" value="2"/>
</dbReference>
<dbReference type="SUPFAM" id="SSF57850">
    <property type="entry name" value="RING/U-box"/>
    <property type="match status" value="1"/>
</dbReference>
<dbReference type="PROSITE" id="PS51192">
    <property type="entry name" value="HELICASE_ATP_BIND_1"/>
    <property type="match status" value="1"/>
</dbReference>
<dbReference type="PROSITE" id="PS51194">
    <property type="entry name" value="HELICASE_CTER"/>
    <property type="match status" value="1"/>
</dbReference>
<dbReference type="PROSITE" id="PS00518">
    <property type="entry name" value="ZF_RING_1"/>
    <property type="match status" value="1"/>
</dbReference>
<dbReference type="PROSITE" id="PS50089">
    <property type="entry name" value="ZF_RING_2"/>
    <property type="match status" value="1"/>
</dbReference>
<keyword id="KW-0067">ATP-binding</keyword>
<keyword id="KW-0963">Cytoplasm</keyword>
<keyword id="KW-0227">DNA damage</keyword>
<keyword id="KW-0234">DNA repair</keyword>
<keyword id="KW-0238">DNA-binding</keyword>
<keyword id="KW-0347">Helicase</keyword>
<keyword id="KW-0378">Hydrolase</keyword>
<keyword id="KW-0479">Metal-binding</keyword>
<keyword id="KW-0547">Nucleotide-binding</keyword>
<keyword id="KW-0539">Nucleus</keyword>
<keyword id="KW-1185">Reference proteome</keyword>
<keyword id="KW-0862">Zinc</keyword>
<keyword id="KW-0863">Zinc-finger</keyword>
<sequence>MTMEKKRYFSVMSEDRSPNLVTAEQNEELKNSSVSKDSQEDSLFVVDDSDIEEQTESNILENTNPVPHVHRLEYEEFESQIKSVVGTISSHAMNHLFKKYHDKQNYLKLAVQEYLQGIDENDTDIRIVGNSPDGNNSPNVHRKRIYEQEQDDLMSRLQRECQRSQDEEKKKSWNRFIGSLNVQAWATRPTTKPLKYLEKLELRRLMPKKLNVGKPTKEKTKFGDSSIIRIYTIPKYTEESGREIGRIPEDITRILVPLIDLDISSFYTTVMIDTEKRLSTGDSFYIQIDCYLSQNAFSGKELERSMSQSDQDLNALKRQKKMDTRTRFDFSTETNTEAILRLRQYSLSRFFQRLNIKPIPQKSDHADDINEASETPIIIDSENEDDHIVKEDHEQQNLDQLKQIMQANQQSELLDSLPETTKPPIFNFKLDLRKYQKHGLSWMLTREREIAVLETLSKNDDDDNDNDILTTQDKANIQERNDAFMNPLWDIFEWPKDTSMHKSESSPTEDRMDDNYFYANMYNGELSLTKPVIRSMVKGGILADEMGLGKTISTLALINSVPIDVMFEENKELEDKTIYASKTTLIIVPMSLLSQWQKEFDKANNNSNHKCFIYYGDSATTDLSPVLCNKKKDIPIVMITTYGTVLNEFTRISNRRDAKGFLPKIGLFSVKFFRIVLDEGHNIRNRTAKTSKAIYEILSNRKWVLTGTPVINRLDDLYSLVKFLELEPWSNFSYWKTFVTLPFEQRKISQTLDVVKSILEPIFIRRTKNMKQSNGKPLVELPPKEVVIEEVKFNEVEEKLYNWFKARASQSFKDGIKSGDLFKKYSQILTHILRLRQVCCHVDLVGSANEMEQELVDPNTDLSEANGESDSISMVNNVLDSYHADNNHDEKFKNNTEVRSVMFPLYEKIDLKESECSICTQSPIPLGEMALTPCGHAYCLNCVLEHFDFQEKNSQKPLCPNCREPISKYKIFKLRHRDTSVKEIRFHTKQEMEDPSQNFKFQLYLYDPTKTSSKIQCLINHLKILKEQSPNEQVVVFSQFSSYLDIIENELKIQISNDFVVYKFDGRLNMNERQKILENFSSQKHENKVMILLLSLKAGGVGLNLTTASRAFMMDPWWSPSVEDQAIDRLHRIGQNSNVKVTRFIMADSIETKMLKIQERKKQIGEAVGAEEDERRKRRIEEMQILFEDD</sequence>
<evidence type="ECO:0000250" key="1"/>
<evidence type="ECO:0000255" key="2">
    <source>
        <dbReference type="PROSITE-ProRule" id="PRU00175"/>
    </source>
</evidence>
<evidence type="ECO:0000255" key="3">
    <source>
        <dbReference type="PROSITE-ProRule" id="PRU00541"/>
    </source>
</evidence>
<evidence type="ECO:0000255" key="4">
    <source>
        <dbReference type="PROSITE-ProRule" id="PRU00542"/>
    </source>
</evidence>
<evidence type="ECO:0000256" key="5">
    <source>
        <dbReference type="SAM" id="MobiDB-lite"/>
    </source>
</evidence>
<evidence type="ECO:0000305" key="6"/>
<accession>Q6BIP2</accession>
<accession>B5RV54</accession>
<proteinExistence type="inferred from homology"/>
<protein>
    <recommendedName>
        <fullName>DNA repair protein RAD5</fullName>
        <ecNumber>3.6.4.-</ecNumber>
    </recommendedName>
</protein>
<feature type="chain" id="PRO_0000056122" description="DNA repair protein RAD5">
    <location>
        <begin position="1"/>
        <end position="1190"/>
    </location>
</feature>
<feature type="domain" description="Helicase ATP-binding" evidence="3">
    <location>
        <begin position="531"/>
        <end position="727"/>
    </location>
</feature>
<feature type="domain" description="Helicase C-terminal" evidence="4">
    <location>
        <begin position="1017"/>
        <end position="1181"/>
    </location>
</feature>
<feature type="zinc finger region" description="RING-type" evidence="2">
    <location>
        <begin position="916"/>
        <end position="963"/>
    </location>
</feature>
<feature type="region of interest" description="Disordered" evidence="5">
    <location>
        <begin position="1"/>
        <end position="41"/>
    </location>
</feature>
<feature type="short sequence motif" description="DEGH box">
    <location>
        <begin position="678"/>
        <end position="681"/>
    </location>
</feature>
<feature type="compositionally biased region" description="Basic and acidic residues" evidence="5">
    <location>
        <begin position="1"/>
        <end position="17"/>
    </location>
</feature>
<feature type="binding site" evidence="3">
    <location>
        <begin position="544"/>
        <end position="551"/>
    </location>
    <ligand>
        <name>ATP</name>
        <dbReference type="ChEBI" id="CHEBI:30616"/>
    </ligand>
</feature>
<gene>
    <name type="primary">RAD5</name>
    <name type="ordered locus">DEHA2G08800g</name>
</gene>
<organism>
    <name type="scientific">Debaryomyces hansenii (strain ATCC 36239 / CBS 767 / BCRC 21394 / JCM 1990 / NBRC 0083 / IGC 2968)</name>
    <name type="common">Yeast</name>
    <name type="synonym">Torulaspora hansenii</name>
    <dbReference type="NCBI Taxonomy" id="284592"/>
    <lineage>
        <taxon>Eukaryota</taxon>
        <taxon>Fungi</taxon>
        <taxon>Dikarya</taxon>
        <taxon>Ascomycota</taxon>
        <taxon>Saccharomycotina</taxon>
        <taxon>Pichiomycetes</taxon>
        <taxon>Debaryomycetaceae</taxon>
        <taxon>Debaryomyces</taxon>
    </lineage>
</organism>